<comment type="function">
    <text evidence="4">Odorant receptor.</text>
</comment>
<comment type="subcellular location">
    <subcellularLocation>
        <location>Cell membrane</location>
        <topology>Multi-pass membrane protein</topology>
    </subcellularLocation>
</comment>
<comment type="similarity">
    <text evidence="2">Belongs to the G-protein coupled receptor 1 family.</text>
</comment>
<comment type="online information" name="Human Olfactory Receptor Data Exploratorium (HORDE)">
    <link uri="http://genome.weizmann.ac.il/horde/card/index/symbol:OR13F1"/>
</comment>
<proteinExistence type="evidence at transcript level"/>
<reference key="1">
    <citation type="submission" date="2001-07" db="EMBL/GenBank/DDBJ databases">
        <title>Genome-wide discovery and analysis of human seven transmembrane helix receptor genes.</title>
        <authorList>
            <person name="Suwa M."/>
            <person name="Sato T."/>
            <person name="Okouchi I."/>
            <person name="Arita M."/>
            <person name="Futami K."/>
            <person name="Matsumoto S."/>
            <person name="Tsutsumi S."/>
            <person name="Aburatani H."/>
            <person name="Asai K."/>
            <person name="Akiyama Y."/>
        </authorList>
    </citation>
    <scope>NUCLEOTIDE SEQUENCE [GENOMIC DNA]</scope>
</reference>
<reference key="2">
    <citation type="journal article" date="2004" name="Nature">
        <title>DNA sequence and analysis of human chromosome 9.</title>
        <authorList>
            <person name="Humphray S.J."/>
            <person name="Oliver K."/>
            <person name="Hunt A.R."/>
            <person name="Plumb R.W."/>
            <person name="Loveland J.E."/>
            <person name="Howe K.L."/>
            <person name="Andrews T.D."/>
            <person name="Searle S."/>
            <person name="Hunt S.E."/>
            <person name="Scott C.E."/>
            <person name="Jones M.C."/>
            <person name="Ainscough R."/>
            <person name="Almeida J.P."/>
            <person name="Ambrose K.D."/>
            <person name="Ashwell R.I.S."/>
            <person name="Babbage A.K."/>
            <person name="Babbage S."/>
            <person name="Bagguley C.L."/>
            <person name="Bailey J."/>
            <person name="Banerjee R."/>
            <person name="Barker D.J."/>
            <person name="Barlow K.F."/>
            <person name="Bates K."/>
            <person name="Beasley H."/>
            <person name="Beasley O."/>
            <person name="Bird C.P."/>
            <person name="Bray-Allen S."/>
            <person name="Brown A.J."/>
            <person name="Brown J.Y."/>
            <person name="Burford D."/>
            <person name="Burrill W."/>
            <person name="Burton J."/>
            <person name="Carder C."/>
            <person name="Carter N.P."/>
            <person name="Chapman J.C."/>
            <person name="Chen Y."/>
            <person name="Clarke G."/>
            <person name="Clark S.Y."/>
            <person name="Clee C.M."/>
            <person name="Clegg S."/>
            <person name="Collier R.E."/>
            <person name="Corby N."/>
            <person name="Crosier M."/>
            <person name="Cummings A.T."/>
            <person name="Davies J."/>
            <person name="Dhami P."/>
            <person name="Dunn M."/>
            <person name="Dutta I."/>
            <person name="Dyer L.W."/>
            <person name="Earthrowl M.E."/>
            <person name="Faulkner L."/>
            <person name="Fleming C.J."/>
            <person name="Frankish A."/>
            <person name="Frankland J.A."/>
            <person name="French L."/>
            <person name="Fricker D.G."/>
            <person name="Garner P."/>
            <person name="Garnett J."/>
            <person name="Ghori J."/>
            <person name="Gilbert J.G.R."/>
            <person name="Glison C."/>
            <person name="Grafham D.V."/>
            <person name="Gribble S."/>
            <person name="Griffiths C."/>
            <person name="Griffiths-Jones S."/>
            <person name="Grocock R."/>
            <person name="Guy J."/>
            <person name="Hall R.E."/>
            <person name="Hammond S."/>
            <person name="Harley J.L."/>
            <person name="Harrison E.S.I."/>
            <person name="Hart E.A."/>
            <person name="Heath P.D."/>
            <person name="Henderson C.D."/>
            <person name="Hopkins B.L."/>
            <person name="Howard P.J."/>
            <person name="Howden P.J."/>
            <person name="Huckle E."/>
            <person name="Johnson C."/>
            <person name="Johnson D."/>
            <person name="Joy A.A."/>
            <person name="Kay M."/>
            <person name="Keenan S."/>
            <person name="Kershaw J.K."/>
            <person name="Kimberley A.M."/>
            <person name="King A."/>
            <person name="Knights A."/>
            <person name="Laird G.K."/>
            <person name="Langford C."/>
            <person name="Lawlor S."/>
            <person name="Leongamornlert D.A."/>
            <person name="Leversha M."/>
            <person name="Lloyd C."/>
            <person name="Lloyd D.M."/>
            <person name="Lovell J."/>
            <person name="Martin S."/>
            <person name="Mashreghi-Mohammadi M."/>
            <person name="Matthews L."/>
            <person name="McLaren S."/>
            <person name="McLay K.E."/>
            <person name="McMurray A."/>
            <person name="Milne S."/>
            <person name="Nickerson T."/>
            <person name="Nisbett J."/>
            <person name="Nordsiek G."/>
            <person name="Pearce A.V."/>
            <person name="Peck A.I."/>
            <person name="Porter K.M."/>
            <person name="Pandian R."/>
            <person name="Pelan S."/>
            <person name="Phillimore B."/>
            <person name="Povey S."/>
            <person name="Ramsey Y."/>
            <person name="Rand V."/>
            <person name="Scharfe M."/>
            <person name="Sehra H.K."/>
            <person name="Shownkeen R."/>
            <person name="Sims S.K."/>
            <person name="Skuce C.D."/>
            <person name="Smith M."/>
            <person name="Steward C.A."/>
            <person name="Swarbreck D."/>
            <person name="Sycamore N."/>
            <person name="Tester J."/>
            <person name="Thorpe A."/>
            <person name="Tracey A."/>
            <person name="Tromans A."/>
            <person name="Thomas D.W."/>
            <person name="Wall M."/>
            <person name="Wallis J.M."/>
            <person name="West A.P."/>
            <person name="Whitehead S.L."/>
            <person name="Willey D.L."/>
            <person name="Williams S.A."/>
            <person name="Wilming L."/>
            <person name="Wray P.W."/>
            <person name="Young L."/>
            <person name="Ashurst J.L."/>
            <person name="Coulson A."/>
            <person name="Blocker H."/>
            <person name="Durbin R.M."/>
            <person name="Sulston J.E."/>
            <person name="Hubbard T."/>
            <person name="Jackson M.J."/>
            <person name="Bentley D.R."/>
            <person name="Beck S."/>
            <person name="Rogers J."/>
            <person name="Dunham I."/>
        </authorList>
    </citation>
    <scope>NUCLEOTIDE SEQUENCE [LARGE SCALE GENOMIC DNA]</scope>
</reference>
<reference key="3">
    <citation type="journal article" date="2004" name="Genome Res.">
        <title>The status, quality, and expansion of the NIH full-length cDNA project: the Mammalian Gene Collection (MGC).</title>
        <authorList>
            <consortium name="The MGC Project Team"/>
        </authorList>
    </citation>
    <scope>NUCLEOTIDE SEQUENCE [LARGE SCALE MRNA]</scope>
    <scope>VARIANTS VAL-101; ILE-134 AND MET-254</scope>
</reference>
<reference key="4">
    <citation type="journal article" date="2004" name="Proc. Natl. Acad. Sci. U.S.A.">
        <title>The human olfactory receptor gene family.</title>
        <authorList>
            <person name="Malnic B."/>
            <person name="Godfrey P.A."/>
            <person name="Buck L.B."/>
        </authorList>
    </citation>
    <scope>IDENTIFICATION</scope>
</reference>
<reference key="5">
    <citation type="journal article" date="2004" name="Proc. Natl. Acad. Sci. U.S.A.">
        <authorList>
            <person name="Malnic B."/>
            <person name="Godfrey P.A."/>
            <person name="Buck L.B."/>
        </authorList>
    </citation>
    <scope>ERRATUM OF PUBMED:14983052</scope>
</reference>
<feature type="chain" id="PRO_0000150738" description="Olfactory receptor 13F1">
    <location>
        <begin position="1"/>
        <end position="319"/>
    </location>
</feature>
<feature type="topological domain" description="Extracellular" evidence="1">
    <location>
        <begin position="1"/>
        <end position="25"/>
    </location>
</feature>
<feature type="transmembrane region" description="Helical; Name=1" evidence="1">
    <location>
        <begin position="26"/>
        <end position="46"/>
    </location>
</feature>
<feature type="topological domain" description="Cytoplasmic" evidence="1">
    <location>
        <begin position="47"/>
        <end position="54"/>
    </location>
</feature>
<feature type="transmembrane region" description="Helical; Name=2" evidence="1">
    <location>
        <begin position="55"/>
        <end position="75"/>
    </location>
</feature>
<feature type="topological domain" description="Extracellular" evidence="1">
    <location>
        <begin position="76"/>
        <end position="99"/>
    </location>
</feature>
<feature type="transmembrane region" description="Helical; Name=3" evidence="1">
    <location>
        <begin position="100"/>
        <end position="120"/>
    </location>
</feature>
<feature type="topological domain" description="Cytoplasmic" evidence="1">
    <location>
        <begin position="121"/>
        <end position="139"/>
    </location>
</feature>
<feature type="transmembrane region" description="Helical; Name=4" evidence="1">
    <location>
        <begin position="140"/>
        <end position="160"/>
    </location>
</feature>
<feature type="topological domain" description="Extracellular" evidence="1">
    <location>
        <begin position="161"/>
        <end position="197"/>
    </location>
</feature>
<feature type="transmembrane region" description="Helical; Name=5" evidence="1">
    <location>
        <begin position="198"/>
        <end position="217"/>
    </location>
</feature>
<feature type="topological domain" description="Cytoplasmic" evidence="1">
    <location>
        <begin position="218"/>
        <end position="237"/>
    </location>
</feature>
<feature type="transmembrane region" description="Helical; Name=6" evidence="1">
    <location>
        <begin position="238"/>
        <end position="258"/>
    </location>
</feature>
<feature type="topological domain" description="Extracellular" evidence="1">
    <location>
        <begin position="259"/>
        <end position="271"/>
    </location>
</feature>
<feature type="transmembrane region" description="Helical; Name=7" evidence="1">
    <location>
        <begin position="272"/>
        <end position="292"/>
    </location>
</feature>
<feature type="topological domain" description="Cytoplasmic" evidence="1">
    <location>
        <begin position="293"/>
        <end position="319"/>
    </location>
</feature>
<feature type="glycosylation site" description="N-linked (GlcNAc...) asparagine" evidence="1">
    <location>
        <position position="5"/>
    </location>
</feature>
<feature type="disulfide bond" evidence="2">
    <location>
        <begin position="97"/>
        <end position="189"/>
    </location>
</feature>
<feature type="sequence variant" id="VAR_034309" description="In dbSNP:rs7049042.">
    <original>F</original>
    <variation>S</variation>
    <location>
        <position position="18"/>
    </location>
</feature>
<feature type="sequence variant" id="VAR_034310" description="In dbSNP:rs7018553.">
    <original>F</original>
    <variation>S</variation>
    <location>
        <position position="94"/>
    </location>
</feature>
<feature type="sequence variant" id="VAR_024137" description="In dbSNP:rs1403812." evidence="3">
    <original>M</original>
    <variation>V</variation>
    <location>
        <position position="101"/>
    </location>
</feature>
<feature type="sequence variant" id="VAR_053302" description="In dbSNP:rs1403811." evidence="3">
    <original>V</original>
    <variation>I</variation>
    <location>
        <position position="134"/>
    </location>
</feature>
<feature type="sequence variant" id="VAR_034311" description="In dbSNP:rs7030820." evidence="3">
    <original>T</original>
    <variation>M</variation>
    <location>
        <position position="254"/>
    </location>
</feature>
<feature type="sequence variant" id="VAR_053303" description="In dbSNP:rs7847413.">
    <original>I</original>
    <variation>T</variation>
    <location>
        <position position="270"/>
    </location>
</feature>
<organism>
    <name type="scientific">Homo sapiens</name>
    <name type="common">Human</name>
    <dbReference type="NCBI Taxonomy" id="9606"/>
    <lineage>
        <taxon>Eukaryota</taxon>
        <taxon>Metazoa</taxon>
        <taxon>Chordata</taxon>
        <taxon>Craniata</taxon>
        <taxon>Vertebrata</taxon>
        <taxon>Euteleostomi</taxon>
        <taxon>Mammalia</taxon>
        <taxon>Eutheria</taxon>
        <taxon>Euarchontoglires</taxon>
        <taxon>Primates</taxon>
        <taxon>Haplorrhini</taxon>
        <taxon>Catarrhini</taxon>
        <taxon>Hominidae</taxon>
        <taxon>Homo</taxon>
    </lineage>
</organism>
<gene>
    <name type="primary">OR13F1</name>
</gene>
<keyword id="KW-1003">Cell membrane</keyword>
<keyword id="KW-1015">Disulfide bond</keyword>
<keyword id="KW-0297">G-protein coupled receptor</keyword>
<keyword id="KW-0325">Glycoprotein</keyword>
<keyword id="KW-0472">Membrane</keyword>
<keyword id="KW-0552">Olfaction</keyword>
<keyword id="KW-0675">Receptor</keyword>
<keyword id="KW-1185">Reference proteome</keyword>
<keyword id="KW-0716">Sensory transduction</keyword>
<keyword id="KW-0807">Transducer</keyword>
<keyword id="KW-0812">Transmembrane</keyword>
<keyword id="KW-1133">Transmembrane helix</keyword>
<dbReference type="EMBL" id="AB065715">
    <property type="protein sequence ID" value="BAC05936.1"/>
    <property type="molecule type" value="Genomic_DNA"/>
</dbReference>
<dbReference type="EMBL" id="AL450426">
    <property type="status" value="NOT_ANNOTATED_CDS"/>
    <property type="molecule type" value="Genomic_DNA"/>
</dbReference>
<dbReference type="EMBL" id="BC140739">
    <property type="protein sequence ID" value="AAI40740.1"/>
    <property type="molecule type" value="mRNA"/>
</dbReference>
<dbReference type="EMBL" id="BK004412">
    <property type="protein sequence ID" value="DAA04810.1"/>
    <property type="molecule type" value="Genomic_DNA"/>
</dbReference>
<dbReference type="CCDS" id="CCDS35087.1"/>
<dbReference type="RefSeq" id="NP_001004485.1">
    <property type="nucleotide sequence ID" value="NM_001004485.1"/>
</dbReference>
<dbReference type="SMR" id="Q8NGS4"/>
<dbReference type="FunCoup" id="Q8NGS4">
    <property type="interactions" value="459"/>
</dbReference>
<dbReference type="STRING" id="9606.ENSP00000334452"/>
<dbReference type="GlyCosmos" id="Q8NGS4">
    <property type="glycosylation" value="1 site, No reported glycans"/>
</dbReference>
<dbReference type="GlyGen" id="Q8NGS4">
    <property type="glycosylation" value="1 site"/>
</dbReference>
<dbReference type="iPTMnet" id="Q8NGS4"/>
<dbReference type="PhosphoSitePlus" id="Q8NGS4"/>
<dbReference type="BioMuta" id="OR13F1"/>
<dbReference type="DMDM" id="38372763"/>
<dbReference type="jPOST" id="Q8NGS4"/>
<dbReference type="MassIVE" id="Q8NGS4"/>
<dbReference type="PaxDb" id="9606-ENSP00000334452"/>
<dbReference type="PeptideAtlas" id="Q8NGS4"/>
<dbReference type="ProteomicsDB" id="73591"/>
<dbReference type="Antibodypedia" id="57853">
    <property type="antibodies" value="84 antibodies from 20 providers"/>
</dbReference>
<dbReference type="DNASU" id="138805"/>
<dbReference type="Ensembl" id="ENST00000334726.3">
    <property type="protein sequence ID" value="ENSP00000334452.2"/>
    <property type="gene ID" value="ENSG00000186881.3"/>
</dbReference>
<dbReference type="GeneID" id="138805"/>
<dbReference type="KEGG" id="hsa:138805"/>
<dbReference type="MANE-Select" id="ENST00000334726.3">
    <property type="protein sequence ID" value="ENSP00000334452.2"/>
    <property type="RefSeq nucleotide sequence ID" value="NM_001004485.1"/>
    <property type="RefSeq protein sequence ID" value="NP_001004485.1"/>
</dbReference>
<dbReference type="UCSC" id="uc011lvm.2">
    <property type="organism name" value="human"/>
</dbReference>
<dbReference type="AGR" id="HGNC:14723"/>
<dbReference type="CTD" id="138805"/>
<dbReference type="GeneCards" id="OR13F1"/>
<dbReference type="HGNC" id="HGNC:14723">
    <property type="gene designation" value="OR13F1"/>
</dbReference>
<dbReference type="HPA" id="ENSG00000186881">
    <property type="expression patterns" value="Not detected"/>
</dbReference>
<dbReference type="neXtProt" id="NX_Q8NGS4"/>
<dbReference type="PharmGKB" id="PA32045"/>
<dbReference type="VEuPathDB" id="HostDB:ENSG00000186881"/>
<dbReference type="eggNOG" id="ENOG502RTW9">
    <property type="taxonomic scope" value="Eukaryota"/>
</dbReference>
<dbReference type="GeneTree" id="ENSGT00940000162868"/>
<dbReference type="HOGENOM" id="CLU_012526_1_0_1"/>
<dbReference type="InParanoid" id="Q8NGS4"/>
<dbReference type="OMA" id="CAFLIPS"/>
<dbReference type="OrthoDB" id="9574504at2759"/>
<dbReference type="PAN-GO" id="Q8NGS4">
    <property type="GO annotations" value="2 GO annotations based on evolutionary models"/>
</dbReference>
<dbReference type="PhylomeDB" id="Q8NGS4"/>
<dbReference type="TreeFam" id="TF352686"/>
<dbReference type="PathwayCommons" id="Q8NGS4"/>
<dbReference type="Reactome" id="R-HSA-9752946">
    <property type="pathway name" value="Expression and translocation of olfactory receptors"/>
</dbReference>
<dbReference type="BioGRID-ORCS" id="138805">
    <property type="hits" value="10 hits in 745 CRISPR screens"/>
</dbReference>
<dbReference type="GeneWiki" id="OR13F1"/>
<dbReference type="GenomeRNAi" id="138805"/>
<dbReference type="Pharos" id="Q8NGS4">
    <property type="development level" value="Tdark"/>
</dbReference>
<dbReference type="PRO" id="PR:Q8NGS4"/>
<dbReference type="Proteomes" id="UP000005640">
    <property type="component" value="Chromosome 9"/>
</dbReference>
<dbReference type="RNAct" id="Q8NGS4">
    <property type="molecule type" value="protein"/>
</dbReference>
<dbReference type="GO" id="GO:0005886">
    <property type="term" value="C:plasma membrane"/>
    <property type="evidence" value="ECO:0000318"/>
    <property type="project" value="GO_Central"/>
</dbReference>
<dbReference type="GO" id="GO:0004930">
    <property type="term" value="F:G protein-coupled receptor activity"/>
    <property type="evidence" value="ECO:0007669"/>
    <property type="project" value="UniProtKB-KW"/>
</dbReference>
<dbReference type="GO" id="GO:0004984">
    <property type="term" value="F:olfactory receptor activity"/>
    <property type="evidence" value="ECO:0000318"/>
    <property type="project" value="GO_Central"/>
</dbReference>
<dbReference type="GO" id="GO:0050911">
    <property type="term" value="P:detection of chemical stimulus involved in sensory perception of smell"/>
    <property type="evidence" value="ECO:0000318"/>
    <property type="project" value="GO_Central"/>
</dbReference>
<dbReference type="CDD" id="cd15430">
    <property type="entry name" value="7tmA_OR13-like"/>
    <property type="match status" value="1"/>
</dbReference>
<dbReference type="FunFam" id="1.20.1070.10:FF:000005">
    <property type="entry name" value="Olfactory receptor"/>
    <property type="match status" value="1"/>
</dbReference>
<dbReference type="Gene3D" id="1.20.1070.10">
    <property type="entry name" value="Rhodopsin 7-helix transmembrane proteins"/>
    <property type="match status" value="1"/>
</dbReference>
<dbReference type="InterPro" id="IPR000276">
    <property type="entry name" value="GPCR_Rhodpsn"/>
</dbReference>
<dbReference type="InterPro" id="IPR017452">
    <property type="entry name" value="GPCR_Rhodpsn_7TM"/>
</dbReference>
<dbReference type="InterPro" id="IPR000725">
    <property type="entry name" value="Olfact_rcpt"/>
</dbReference>
<dbReference type="PANTHER" id="PTHR26453">
    <property type="entry name" value="OLFACTORY RECEPTOR"/>
    <property type="match status" value="1"/>
</dbReference>
<dbReference type="Pfam" id="PF13853">
    <property type="entry name" value="7tm_4"/>
    <property type="match status" value="1"/>
</dbReference>
<dbReference type="PRINTS" id="PR00237">
    <property type="entry name" value="GPCRRHODOPSN"/>
</dbReference>
<dbReference type="PRINTS" id="PR00245">
    <property type="entry name" value="OLFACTORYR"/>
</dbReference>
<dbReference type="SUPFAM" id="SSF81321">
    <property type="entry name" value="Family A G protein-coupled receptor-like"/>
    <property type="match status" value="1"/>
</dbReference>
<dbReference type="PROSITE" id="PS00237">
    <property type="entry name" value="G_PROTEIN_RECEP_F1_1"/>
    <property type="match status" value="1"/>
</dbReference>
<dbReference type="PROSITE" id="PS50262">
    <property type="entry name" value="G_PROTEIN_RECEP_F1_2"/>
    <property type="match status" value="1"/>
</dbReference>
<protein>
    <recommendedName>
        <fullName>Olfactory receptor 13F1</fullName>
    </recommendedName>
    <alternativeName>
        <fullName>Olfactory receptor OR9-6</fullName>
    </alternativeName>
</protein>
<accession>Q8NGS4</accession>
<accession>B9EIM5</accession>
<accession>Q6IF50</accession>
<sequence length="319" mass="35646">MFPANWTSVKVFFFLGFFHYPKVQVIIFAVCLLMYLITLLGNIFLISITILDSHLHTPMYLFLSNLSFLDIWYSSSALSPMLANFVSGRNTISFSGCATQMYLSLAMGSTECVLLPMMAYDRYVAICNPLRYPVIMNRRTCVQIAAGSWMTGCLTAMVEMMSVLPLSLCGNSIINHFTCEILAILKLVCVDTSLVQLIMLVISVLLLPMPMLLICISYAFILASILRISSVEGRSKAFSTCTAHLMVVVLFYGTALSMHLKPSAVDSQEIDKFMALVYAGQTPMLNPIIYSLRNKEVKVALKKLLIRNHFNTAFISILK</sequence>
<name>O13F1_HUMAN</name>
<evidence type="ECO:0000255" key="1"/>
<evidence type="ECO:0000255" key="2">
    <source>
        <dbReference type="PROSITE-ProRule" id="PRU00521"/>
    </source>
</evidence>
<evidence type="ECO:0000269" key="3">
    <source>
    </source>
</evidence>
<evidence type="ECO:0000305" key="4"/>